<keyword id="KW-0997">Cell inner membrane</keyword>
<keyword id="KW-1003">Cell membrane</keyword>
<keyword id="KW-0472">Membrane</keyword>
<keyword id="KW-0520">NAD</keyword>
<keyword id="KW-0874">Quinone</keyword>
<keyword id="KW-1278">Translocase</keyword>
<keyword id="KW-0812">Transmembrane</keyword>
<keyword id="KW-1133">Transmembrane helix</keyword>
<keyword id="KW-0813">Transport</keyword>
<sequence>MDQTLSDFGAVFVFLLLGTVFVVGGYLTARLLRPSRPNPEKLAVYECGEDAVGTSWVKFNIRFYVVALIFIIFDVEVVFLFPWATVFKQLGEFALIEALVFAGILIIGLAYAWVKGDLDWVRPTPNIPSMPQPPQKEK</sequence>
<name>NUOA_PROA2</name>
<dbReference type="EC" id="7.1.1.-" evidence="1"/>
<dbReference type="EMBL" id="CP001108">
    <property type="protein sequence ID" value="ACF45888.1"/>
    <property type="molecule type" value="Genomic_DNA"/>
</dbReference>
<dbReference type="RefSeq" id="WP_012505425.1">
    <property type="nucleotide sequence ID" value="NC_011059.1"/>
</dbReference>
<dbReference type="SMR" id="B4S751"/>
<dbReference type="STRING" id="290512.Paes_0842"/>
<dbReference type="KEGG" id="paa:Paes_0842"/>
<dbReference type="eggNOG" id="COG0838">
    <property type="taxonomic scope" value="Bacteria"/>
</dbReference>
<dbReference type="HOGENOM" id="CLU_119549_1_0_10"/>
<dbReference type="Proteomes" id="UP000002725">
    <property type="component" value="Chromosome"/>
</dbReference>
<dbReference type="GO" id="GO:0030964">
    <property type="term" value="C:NADH dehydrogenase complex"/>
    <property type="evidence" value="ECO:0007669"/>
    <property type="project" value="TreeGrafter"/>
</dbReference>
<dbReference type="GO" id="GO:0005886">
    <property type="term" value="C:plasma membrane"/>
    <property type="evidence" value="ECO:0007669"/>
    <property type="project" value="UniProtKB-SubCell"/>
</dbReference>
<dbReference type="GO" id="GO:0008137">
    <property type="term" value="F:NADH dehydrogenase (ubiquinone) activity"/>
    <property type="evidence" value="ECO:0007669"/>
    <property type="project" value="InterPro"/>
</dbReference>
<dbReference type="GO" id="GO:0050136">
    <property type="term" value="F:NADH:ubiquinone reductase (non-electrogenic) activity"/>
    <property type="evidence" value="ECO:0007669"/>
    <property type="project" value="UniProtKB-UniRule"/>
</dbReference>
<dbReference type="GO" id="GO:0048038">
    <property type="term" value="F:quinone binding"/>
    <property type="evidence" value="ECO:0007669"/>
    <property type="project" value="UniProtKB-KW"/>
</dbReference>
<dbReference type="Gene3D" id="1.20.58.1610">
    <property type="entry name" value="NADH:ubiquinone/plastoquinone oxidoreductase, chain 3"/>
    <property type="match status" value="1"/>
</dbReference>
<dbReference type="HAMAP" id="MF_01394">
    <property type="entry name" value="NDH1_NuoA"/>
    <property type="match status" value="1"/>
</dbReference>
<dbReference type="InterPro" id="IPR023043">
    <property type="entry name" value="NAD(P)H_OxRDtase_bac/plastid"/>
</dbReference>
<dbReference type="InterPro" id="IPR000440">
    <property type="entry name" value="NADH_UbQ/plastoQ_OxRdtase_su3"/>
</dbReference>
<dbReference type="InterPro" id="IPR038430">
    <property type="entry name" value="NDAH_ubi_oxred_su3_sf"/>
</dbReference>
<dbReference type="PANTHER" id="PTHR11058">
    <property type="entry name" value="NADH-UBIQUINONE OXIDOREDUCTASE CHAIN 3"/>
    <property type="match status" value="1"/>
</dbReference>
<dbReference type="PANTHER" id="PTHR11058:SF9">
    <property type="entry name" value="NADH-UBIQUINONE OXIDOREDUCTASE CHAIN 3"/>
    <property type="match status" value="1"/>
</dbReference>
<dbReference type="Pfam" id="PF00507">
    <property type="entry name" value="Oxidored_q4"/>
    <property type="match status" value="1"/>
</dbReference>
<accession>B4S751</accession>
<evidence type="ECO:0000255" key="1">
    <source>
        <dbReference type="HAMAP-Rule" id="MF_01394"/>
    </source>
</evidence>
<organism>
    <name type="scientific">Prosthecochloris aestuarii (strain DSM 271 / SK 413)</name>
    <dbReference type="NCBI Taxonomy" id="290512"/>
    <lineage>
        <taxon>Bacteria</taxon>
        <taxon>Pseudomonadati</taxon>
        <taxon>Chlorobiota</taxon>
        <taxon>Chlorobiia</taxon>
        <taxon>Chlorobiales</taxon>
        <taxon>Chlorobiaceae</taxon>
        <taxon>Prosthecochloris</taxon>
    </lineage>
</organism>
<comment type="function">
    <text evidence="1">NDH-1 shuttles electrons from NADH, via FMN and iron-sulfur (Fe-S) centers, to quinones in the respiratory chain. The immediate electron acceptor for the enzyme in this species is believed to be a menaquinone. Couples the redox reaction to proton translocation (for every two electrons transferred, four hydrogen ions are translocated across the cytoplasmic membrane), and thus conserves the redox energy in a proton gradient.</text>
</comment>
<comment type="catalytic activity">
    <reaction evidence="1">
        <text>a quinone + NADH + 5 H(+)(in) = a quinol + NAD(+) + 4 H(+)(out)</text>
        <dbReference type="Rhea" id="RHEA:57888"/>
        <dbReference type="ChEBI" id="CHEBI:15378"/>
        <dbReference type="ChEBI" id="CHEBI:24646"/>
        <dbReference type="ChEBI" id="CHEBI:57540"/>
        <dbReference type="ChEBI" id="CHEBI:57945"/>
        <dbReference type="ChEBI" id="CHEBI:132124"/>
    </reaction>
</comment>
<comment type="subunit">
    <text evidence="1">NDH-1 is composed of 14 different subunits. Subunits NuoA, H, J, K, L, M, N constitute the membrane sector of the complex.</text>
</comment>
<comment type="subcellular location">
    <subcellularLocation>
        <location evidence="1">Cell inner membrane</location>
        <topology evidence="1">Multi-pass membrane protein</topology>
    </subcellularLocation>
</comment>
<comment type="similarity">
    <text evidence="1">Belongs to the complex I subunit 3 family.</text>
</comment>
<feature type="chain" id="PRO_0000362730" description="NADH-quinone oxidoreductase subunit A">
    <location>
        <begin position="1"/>
        <end position="138"/>
    </location>
</feature>
<feature type="transmembrane region" description="Helical" evidence="1">
    <location>
        <begin position="8"/>
        <end position="28"/>
    </location>
</feature>
<feature type="transmembrane region" description="Helical" evidence="1">
    <location>
        <begin position="63"/>
        <end position="83"/>
    </location>
</feature>
<feature type="transmembrane region" description="Helical" evidence="1">
    <location>
        <begin position="93"/>
        <end position="113"/>
    </location>
</feature>
<proteinExistence type="inferred from homology"/>
<reference key="1">
    <citation type="submission" date="2008-06" db="EMBL/GenBank/DDBJ databases">
        <title>Complete sequence of chromosome of Prosthecochloris aestuarii DSM 271.</title>
        <authorList>
            <consortium name="US DOE Joint Genome Institute"/>
            <person name="Lucas S."/>
            <person name="Copeland A."/>
            <person name="Lapidus A."/>
            <person name="Glavina del Rio T."/>
            <person name="Dalin E."/>
            <person name="Tice H."/>
            <person name="Bruce D."/>
            <person name="Goodwin L."/>
            <person name="Pitluck S."/>
            <person name="Schmutz J."/>
            <person name="Larimer F."/>
            <person name="Land M."/>
            <person name="Hauser L."/>
            <person name="Kyrpides N."/>
            <person name="Anderson I."/>
            <person name="Liu Z."/>
            <person name="Li T."/>
            <person name="Zhao F."/>
            <person name="Overmann J."/>
            <person name="Bryant D.A."/>
            <person name="Richardson P."/>
        </authorList>
    </citation>
    <scope>NUCLEOTIDE SEQUENCE [LARGE SCALE GENOMIC DNA]</scope>
    <source>
        <strain>DSM 271 / SK 413</strain>
    </source>
</reference>
<protein>
    <recommendedName>
        <fullName evidence="1">NADH-quinone oxidoreductase subunit A</fullName>
        <ecNumber evidence="1">7.1.1.-</ecNumber>
    </recommendedName>
    <alternativeName>
        <fullName evidence="1">NADH dehydrogenase I subunit A</fullName>
    </alternativeName>
    <alternativeName>
        <fullName evidence="1">NDH-1 subunit A</fullName>
    </alternativeName>
    <alternativeName>
        <fullName evidence="1">NUO1</fullName>
    </alternativeName>
</protein>
<gene>
    <name evidence="1" type="primary">nuoA</name>
    <name type="ordered locus">Paes_0842</name>
</gene>